<sequence length="498" mass="56284">MASQGTKRSYEQMETDGERQNATEIRASVGKMIDGIGRFYIQMCTELKLSDYEGRLIQNSLTIERMVLSAFDERRNRYLEEHPSAGKDPKKTGGPIYKRVDGKWMRELILYDKEEIRRIWRQANNGDDATRGLTHMMIWHSNLNDTTYQRTRALVRTGMDPRMCSLMQGSTLPRRSGAAGAAVKGVGTMVMELIRMIKRGINDRNFWRGENGRKTRSAYERMCNILKGKFQTAAQRAMMDQVRESRNPGNAEIEDLIFSARSALILRGSVAHKSCLPACVYGPAVASGYDFEKEGYSLVGIDPFKLLQNSQVYSLIRPNENPAHKSQLVWMACHSAAFEDLRLLSFIRGTKVSPRGKLSTRGVQIASNENMDTMESSTLELRSRYWAIRTRSGGNTNQQRASAGQISVQPTFSVQRNLPFDKSTVMAAFTGNTEGRTSDMRAEIIRMMEDAKPEEVSFRGRGVFELSDEKATNPIVPSFDMSNEGSYFFGDNAEEYDN</sequence>
<keyword id="KW-0167">Capsid protein</keyword>
<keyword id="KW-1139">Helical capsid protein</keyword>
<keyword id="KW-1048">Host nucleus</keyword>
<keyword id="KW-0945">Host-virus interaction</keyword>
<keyword id="KW-0687">Ribonucleoprotein</keyword>
<keyword id="KW-0694">RNA-binding</keyword>
<keyword id="KW-0543">Viral nucleoprotein</keyword>
<keyword id="KW-1163">Viral penetration into host nucleus</keyword>
<keyword id="KW-0946">Virion</keyword>
<keyword id="KW-1160">Virus entry into host cell</keyword>
<organismHost>
    <name type="scientific">Aves</name>
    <dbReference type="NCBI Taxonomy" id="8782"/>
</organismHost>
<organismHost>
    <name type="scientific">Homo sapiens</name>
    <name type="common">Human</name>
    <dbReference type="NCBI Taxonomy" id="9606"/>
</organismHost>
<organismHost>
    <name type="scientific">Sus scrofa</name>
    <name type="common">Pig</name>
    <dbReference type="NCBI Taxonomy" id="9823"/>
</organismHost>
<organism>
    <name type="scientific">Influenza A virus (strain A/California/10/1978 H1N1)</name>
    <dbReference type="NCBI Taxonomy" id="425557"/>
    <lineage>
        <taxon>Viruses</taxon>
        <taxon>Riboviria</taxon>
        <taxon>Orthornavirae</taxon>
        <taxon>Negarnaviricota</taxon>
        <taxon>Polyploviricotina</taxon>
        <taxon>Insthoviricetes</taxon>
        <taxon>Articulavirales</taxon>
        <taxon>Orthomyxoviridae</taxon>
        <taxon>Alphainfluenzavirus</taxon>
        <taxon>Alphainfluenzavirus influenzae</taxon>
        <taxon>Influenza A virus</taxon>
    </lineage>
</organism>
<name>NCAP_I78A6</name>
<feature type="chain" id="PRO_0000079028" description="Nucleoprotein">
    <location>
        <begin position="1"/>
        <end position="498"/>
    </location>
</feature>
<feature type="region of interest" description="Disordered" evidence="2">
    <location>
        <begin position="1"/>
        <end position="21"/>
    </location>
</feature>
<feature type="short sequence motif" description="Unconventional nuclear localization signal" evidence="1">
    <location>
        <begin position="1"/>
        <end position="18"/>
    </location>
</feature>
<feature type="short sequence motif" description="Bipartite nuclear localization signal" evidence="1">
    <location>
        <begin position="198"/>
        <end position="216"/>
    </location>
</feature>
<feature type="compositionally biased region" description="Basic and acidic residues" evidence="2">
    <location>
        <begin position="8"/>
        <end position="21"/>
    </location>
</feature>
<gene>
    <name evidence="1" type="primary">NP</name>
</gene>
<reference key="1">
    <citation type="journal article" date="1989" name="J. Gen. Virol.">
        <title>Biological and genetic evolution of the nucleoprotein gene of human influenza A viruses.</title>
        <authorList>
            <person name="Altmueller A."/>
            <person name="Fitch W.M."/>
            <person name="Scholtissek C."/>
        </authorList>
    </citation>
    <scope>NUCLEOTIDE SEQUENCE [GENOMIC RNA]</scope>
</reference>
<protein>
    <recommendedName>
        <fullName evidence="1">Nucleoprotein</fullName>
    </recommendedName>
    <alternativeName>
        <fullName evidence="1">Nucleocapsid protein</fullName>
        <shortName evidence="1">Protein N</shortName>
    </alternativeName>
</protein>
<accession>P18070</accession>
<comment type="function">
    <text evidence="1">Encapsidates the negative strand viral RNA, protecting it from nucleases. The encapsidated genomic RNA is termed the ribonucleoprotein (RNP) and serves as template for transcription and replication. The RNP needs to be localized in the host nucleus to start an infectious cycle, but is too large to diffuse through the nuclear pore complex. NP comprises at least 2 nuclear localization signals that are responsible for the active RNP import into the nucleus through cellular importin alpha/beta pathway. Later in the infection, nclear export of RNPs are mediated through viral proteins NEP interacting with M1 which binds nucleoproteins. It is possible that nucleoprotein binds directly host exportin-1/XPO1 and plays an active role in RNPs nuclear export. M1 interaction with RNP seems to hide nucleoprotein's nuclear localization signals. Soon after a virion infects a new cell, M1 dissociates from the RNP under acidification of the virion driven by M2 protein. Dissociation of M1 from RNP unmasks nucleoprotein's nuclear localization signals, targeting the RNP to the nucleus.</text>
</comment>
<comment type="subunit">
    <text evidence="1">Homomultimerizes to form the nucleocapsid. May bind host exportin-1/XPO1. Binds to viral genomic RNA. Protein-RNA contacts are mediated by a combination of electrostatic interactions between positively charged residues and the phosphate backbone and planar interactions between aromatic side chains and bases.</text>
</comment>
<comment type="subcellular location">
    <subcellularLocation>
        <location evidence="1">Virion</location>
    </subcellularLocation>
    <subcellularLocation>
        <location evidence="1">Host nucleus</location>
    </subcellularLocation>
</comment>
<comment type="PTM">
    <text evidence="1">Late in virus-infected cells, may be cleaved from a 56-kDa protein to a 53-kDa protein by a cellular caspase. This cleavage might be a marker for the onset of apoptosis in infected cells or have a specific function in virus host interaction.</text>
</comment>
<comment type="similarity">
    <text evidence="1">Belongs to the influenza viruses nucleoprotein family.</text>
</comment>
<dbReference type="EMBL" id="D00600">
    <property type="protein sequence ID" value="BAA00476.1"/>
    <property type="molecule type" value="Genomic_RNA"/>
</dbReference>
<dbReference type="SMR" id="P18070"/>
<dbReference type="GO" id="GO:0019029">
    <property type="term" value="C:helical viral capsid"/>
    <property type="evidence" value="ECO:0007669"/>
    <property type="project" value="UniProtKB-UniRule"/>
</dbReference>
<dbReference type="GO" id="GO:0043657">
    <property type="term" value="C:host cell"/>
    <property type="evidence" value="ECO:0007669"/>
    <property type="project" value="GOC"/>
</dbReference>
<dbReference type="GO" id="GO:0042025">
    <property type="term" value="C:host cell nucleus"/>
    <property type="evidence" value="ECO:0007669"/>
    <property type="project" value="UniProtKB-SubCell"/>
</dbReference>
<dbReference type="GO" id="GO:1990904">
    <property type="term" value="C:ribonucleoprotein complex"/>
    <property type="evidence" value="ECO:0007669"/>
    <property type="project" value="UniProtKB-KW"/>
</dbReference>
<dbReference type="GO" id="GO:0019013">
    <property type="term" value="C:viral nucleocapsid"/>
    <property type="evidence" value="ECO:0007669"/>
    <property type="project" value="UniProtKB-UniRule"/>
</dbReference>
<dbReference type="GO" id="GO:0003723">
    <property type="term" value="F:RNA binding"/>
    <property type="evidence" value="ECO:0007669"/>
    <property type="project" value="UniProtKB-UniRule"/>
</dbReference>
<dbReference type="GO" id="GO:0005198">
    <property type="term" value="F:structural molecule activity"/>
    <property type="evidence" value="ECO:0007669"/>
    <property type="project" value="UniProtKB-UniRule"/>
</dbReference>
<dbReference type="GO" id="GO:0046718">
    <property type="term" value="P:symbiont entry into host cell"/>
    <property type="evidence" value="ECO:0007669"/>
    <property type="project" value="UniProtKB-KW"/>
</dbReference>
<dbReference type="GO" id="GO:0075732">
    <property type="term" value="P:viral penetration into host nucleus"/>
    <property type="evidence" value="ECO:0007669"/>
    <property type="project" value="UniProtKB-UniRule"/>
</dbReference>
<dbReference type="HAMAP" id="MF_04070">
    <property type="entry name" value="INFV_NCAP"/>
    <property type="match status" value="1"/>
</dbReference>
<dbReference type="InterPro" id="IPR002141">
    <property type="entry name" value="Flu_NP"/>
</dbReference>
<dbReference type="Pfam" id="PF00506">
    <property type="entry name" value="Flu_NP"/>
    <property type="match status" value="1"/>
</dbReference>
<dbReference type="SUPFAM" id="SSF161003">
    <property type="entry name" value="flu NP-like"/>
    <property type="match status" value="1"/>
</dbReference>
<proteinExistence type="inferred from homology"/>
<evidence type="ECO:0000255" key="1">
    <source>
        <dbReference type="HAMAP-Rule" id="MF_04070"/>
    </source>
</evidence>
<evidence type="ECO:0000256" key="2">
    <source>
        <dbReference type="SAM" id="MobiDB-lite"/>
    </source>
</evidence>